<comment type="function">
    <text evidence="1">Forms part of the ribosomal stalk which helps the ribosome interact with GTP-bound translation factors.</text>
</comment>
<comment type="subunit">
    <text evidence="1">Part of the ribosomal stalk of the 50S ribosomal subunit. Interacts with L10 and the large rRNA to form the base of the stalk. L10 forms an elongated spine to which L12 dimers bind in a sequential fashion forming a multimeric L10(L12)X complex.</text>
</comment>
<comment type="PTM">
    <text evidence="1">One or more lysine residues are methylated.</text>
</comment>
<comment type="similarity">
    <text evidence="1">Belongs to the universal ribosomal protein uL11 family.</text>
</comment>
<evidence type="ECO:0000255" key="1">
    <source>
        <dbReference type="HAMAP-Rule" id="MF_00736"/>
    </source>
</evidence>
<evidence type="ECO:0000305" key="2"/>
<protein>
    <recommendedName>
        <fullName evidence="1">Large ribosomal subunit protein uL11</fullName>
    </recommendedName>
    <alternativeName>
        <fullName evidence="2">50S ribosomal protein L11</fullName>
    </alternativeName>
</protein>
<accession>A3M1F9</accession>
<keyword id="KW-0488">Methylation</keyword>
<keyword id="KW-0687">Ribonucleoprotein</keyword>
<keyword id="KW-0689">Ribosomal protein</keyword>
<keyword id="KW-0694">RNA-binding</keyword>
<keyword id="KW-0699">rRNA-binding</keyword>
<gene>
    <name evidence="1" type="primary">rplK</name>
    <name type="ordered locus">A1S_0283</name>
</gene>
<sequence>MAKKIDGYIKLQVPAGKANPSPPIGPALGQRGVNIMAFCKEFNAATQKVEPGLPIPVVITVYNDKSFTFIMKTPPASILLKKAAGIQKGSSVPNKTKVGKLTRAQLEEIATTKEPDLTGADLDARVRTIAGSARSMGLEVEL</sequence>
<reference key="1">
    <citation type="journal article" date="2007" name="Genes Dev.">
        <title>New insights into Acinetobacter baumannii pathogenesis revealed by high-density pyrosequencing and transposon mutagenesis.</title>
        <authorList>
            <person name="Smith M.G."/>
            <person name="Gianoulis T.A."/>
            <person name="Pukatzki S."/>
            <person name="Mekalanos J.J."/>
            <person name="Ornston L.N."/>
            <person name="Gerstein M."/>
            <person name="Snyder M."/>
        </authorList>
    </citation>
    <scope>NUCLEOTIDE SEQUENCE [LARGE SCALE GENOMIC DNA]</scope>
    <source>
        <strain>ATCC 17978 / DSM 105126 / CIP 53.77 / LMG 1025 / NCDC KC755 / 5377</strain>
    </source>
</reference>
<dbReference type="EMBL" id="CP000521">
    <property type="protein sequence ID" value="ABO10753.2"/>
    <property type="molecule type" value="Genomic_DNA"/>
</dbReference>
<dbReference type="RefSeq" id="WP_001074682.1">
    <property type="nucleotide sequence ID" value="NZ_CP053098.1"/>
</dbReference>
<dbReference type="SMR" id="A3M1F9"/>
<dbReference type="GeneID" id="9384044"/>
<dbReference type="KEGG" id="acb:A1S_0283"/>
<dbReference type="HOGENOM" id="CLU_074237_2_1_6"/>
<dbReference type="GO" id="GO:0022625">
    <property type="term" value="C:cytosolic large ribosomal subunit"/>
    <property type="evidence" value="ECO:0007669"/>
    <property type="project" value="TreeGrafter"/>
</dbReference>
<dbReference type="GO" id="GO:0070180">
    <property type="term" value="F:large ribosomal subunit rRNA binding"/>
    <property type="evidence" value="ECO:0007669"/>
    <property type="project" value="UniProtKB-UniRule"/>
</dbReference>
<dbReference type="GO" id="GO:0003735">
    <property type="term" value="F:structural constituent of ribosome"/>
    <property type="evidence" value="ECO:0007669"/>
    <property type="project" value="InterPro"/>
</dbReference>
<dbReference type="GO" id="GO:0006412">
    <property type="term" value="P:translation"/>
    <property type="evidence" value="ECO:0007669"/>
    <property type="project" value="UniProtKB-UniRule"/>
</dbReference>
<dbReference type="CDD" id="cd00349">
    <property type="entry name" value="Ribosomal_L11"/>
    <property type="match status" value="1"/>
</dbReference>
<dbReference type="FunFam" id="1.10.10.250:FF:000001">
    <property type="entry name" value="50S ribosomal protein L11"/>
    <property type="match status" value="1"/>
</dbReference>
<dbReference type="FunFam" id="3.30.1550.10:FF:000001">
    <property type="entry name" value="50S ribosomal protein L11"/>
    <property type="match status" value="1"/>
</dbReference>
<dbReference type="Gene3D" id="1.10.10.250">
    <property type="entry name" value="Ribosomal protein L11, C-terminal domain"/>
    <property type="match status" value="1"/>
</dbReference>
<dbReference type="Gene3D" id="3.30.1550.10">
    <property type="entry name" value="Ribosomal protein L11/L12, N-terminal domain"/>
    <property type="match status" value="1"/>
</dbReference>
<dbReference type="HAMAP" id="MF_00736">
    <property type="entry name" value="Ribosomal_uL11"/>
    <property type="match status" value="1"/>
</dbReference>
<dbReference type="InterPro" id="IPR000911">
    <property type="entry name" value="Ribosomal_uL11"/>
</dbReference>
<dbReference type="InterPro" id="IPR006519">
    <property type="entry name" value="Ribosomal_uL11_bac-typ"/>
</dbReference>
<dbReference type="InterPro" id="IPR020783">
    <property type="entry name" value="Ribosomal_uL11_C"/>
</dbReference>
<dbReference type="InterPro" id="IPR036769">
    <property type="entry name" value="Ribosomal_uL11_C_sf"/>
</dbReference>
<dbReference type="InterPro" id="IPR020785">
    <property type="entry name" value="Ribosomal_uL11_CS"/>
</dbReference>
<dbReference type="InterPro" id="IPR020784">
    <property type="entry name" value="Ribosomal_uL11_N"/>
</dbReference>
<dbReference type="InterPro" id="IPR036796">
    <property type="entry name" value="Ribosomal_uL11_N_sf"/>
</dbReference>
<dbReference type="NCBIfam" id="TIGR01632">
    <property type="entry name" value="L11_bact"/>
    <property type="match status" value="1"/>
</dbReference>
<dbReference type="PANTHER" id="PTHR11661">
    <property type="entry name" value="60S RIBOSOMAL PROTEIN L12"/>
    <property type="match status" value="1"/>
</dbReference>
<dbReference type="PANTHER" id="PTHR11661:SF1">
    <property type="entry name" value="LARGE RIBOSOMAL SUBUNIT PROTEIN UL11M"/>
    <property type="match status" value="1"/>
</dbReference>
<dbReference type="Pfam" id="PF00298">
    <property type="entry name" value="Ribosomal_L11"/>
    <property type="match status" value="1"/>
</dbReference>
<dbReference type="Pfam" id="PF03946">
    <property type="entry name" value="Ribosomal_L11_N"/>
    <property type="match status" value="1"/>
</dbReference>
<dbReference type="SMART" id="SM00649">
    <property type="entry name" value="RL11"/>
    <property type="match status" value="1"/>
</dbReference>
<dbReference type="SUPFAM" id="SSF54747">
    <property type="entry name" value="Ribosomal L11/L12e N-terminal domain"/>
    <property type="match status" value="1"/>
</dbReference>
<dbReference type="SUPFAM" id="SSF46906">
    <property type="entry name" value="Ribosomal protein L11, C-terminal domain"/>
    <property type="match status" value="1"/>
</dbReference>
<dbReference type="PROSITE" id="PS00359">
    <property type="entry name" value="RIBOSOMAL_L11"/>
    <property type="match status" value="1"/>
</dbReference>
<feature type="chain" id="PRO_1000132850" description="Large ribosomal subunit protein uL11">
    <location>
        <begin position="1"/>
        <end position="142"/>
    </location>
</feature>
<name>RL11_ACIBT</name>
<proteinExistence type="inferred from homology"/>
<organism>
    <name type="scientific">Acinetobacter baumannii (strain ATCC 17978 / DSM 105126 / CIP 53.77 / LMG 1025 / NCDC KC755 / 5377)</name>
    <dbReference type="NCBI Taxonomy" id="400667"/>
    <lineage>
        <taxon>Bacteria</taxon>
        <taxon>Pseudomonadati</taxon>
        <taxon>Pseudomonadota</taxon>
        <taxon>Gammaproteobacteria</taxon>
        <taxon>Moraxellales</taxon>
        <taxon>Moraxellaceae</taxon>
        <taxon>Acinetobacter</taxon>
        <taxon>Acinetobacter calcoaceticus/baumannii complex</taxon>
    </lineage>
</organism>